<gene>
    <name evidence="2" type="primary">trmB</name>
    <name type="ordered locus">SYNW0285</name>
</gene>
<sequence length="236" mass="26795">MRQHVNPLSRFFQLPLQLPSPGELFDHPEQPIHLDIGCARGRCILGLAELNPGWNHLGVEIRRPLVTAADRDALNSGSGNVRVLFCNANISLESWLAALPNDRLQRVSVQFPDPWFKRRHRKRRVLQPALLLAIAAALQPGRELFLQSDVLAVIEPMVALTELSGCFTRPESDARPWRADNPLPVPTEREQYVLEKNLPVYRVLYRRNASPLPDPEALKSRWQELDNPAETVFTDI</sequence>
<dbReference type="EC" id="2.1.1.33" evidence="2"/>
<dbReference type="EMBL" id="BX569689">
    <property type="protein sequence ID" value="CAE06800.1"/>
    <property type="molecule type" value="Genomic_DNA"/>
</dbReference>
<dbReference type="RefSeq" id="WP_011127159.1">
    <property type="nucleotide sequence ID" value="NC_005070.1"/>
</dbReference>
<dbReference type="SMR" id="Q7U9H3"/>
<dbReference type="STRING" id="84588.SYNW0285"/>
<dbReference type="KEGG" id="syw:SYNW0285"/>
<dbReference type="eggNOG" id="COG0220">
    <property type="taxonomic scope" value="Bacteria"/>
</dbReference>
<dbReference type="HOGENOM" id="CLU_050910_1_3_3"/>
<dbReference type="UniPathway" id="UPA00989"/>
<dbReference type="Proteomes" id="UP000001422">
    <property type="component" value="Chromosome"/>
</dbReference>
<dbReference type="GO" id="GO:0043527">
    <property type="term" value="C:tRNA methyltransferase complex"/>
    <property type="evidence" value="ECO:0007669"/>
    <property type="project" value="TreeGrafter"/>
</dbReference>
<dbReference type="GO" id="GO:0008176">
    <property type="term" value="F:tRNA (guanine(46)-N7)-methyltransferase activity"/>
    <property type="evidence" value="ECO:0007669"/>
    <property type="project" value="UniProtKB-UniRule"/>
</dbReference>
<dbReference type="CDD" id="cd02440">
    <property type="entry name" value="AdoMet_MTases"/>
    <property type="match status" value="1"/>
</dbReference>
<dbReference type="Gene3D" id="3.40.50.150">
    <property type="entry name" value="Vaccinia Virus protein VP39"/>
    <property type="match status" value="1"/>
</dbReference>
<dbReference type="HAMAP" id="MF_01057">
    <property type="entry name" value="tRNA_methyltr_TrmB"/>
    <property type="match status" value="1"/>
</dbReference>
<dbReference type="InterPro" id="IPR029063">
    <property type="entry name" value="SAM-dependent_MTases_sf"/>
</dbReference>
<dbReference type="InterPro" id="IPR003358">
    <property type="entry name" value="tRNA_(Gua-N-7)_MeTrfase_Trmb"/>
</dbReference>
<dbReference type="InterPro" id="IPR055361">
    <property type="entry name" value="tRNA_methyltr_TrmB_bact"/>
</dbReference>
<dbReference type="NCBIfam" id="TIGR00091">
    <property type="entry name" value="tRNA (guanosine(46)-N7)-methyltransferase TrmB"/>
    <property type="match status" value="1"/>
</dbReference>
<dbReference type="PANTHER" id="PTHR23417">
    <property type="entry name" value="3-DEOXY-D-MANNO-OCTULOSONIC-ACID TRANSFERASE/TRNA GUANINE-N 7 - -METHYLTRANSFERASE"/>
    <property type="match status" value="1"/>
</dbReference>
<dbReference type="PANTHER" id="PTHR23417:SF21">
    <property type="entry name" value="TRNA (GUANINE-N(7)-)-METHYLTRANSFERASE"/>
    <property type="match status" value="1"/>
</dbReference>
<dbReference type="Pfam" id="PF02390">
    <property type="entry name" value="Methyltransf_4"/>
    <property type="match status" value="1"/>
</dbReference>
<dbReference type="SUPFAM" id="SSF53335">
    <property type="entry name" value="S-adenosyl-L-methionine-dependent methyltransferases"/>
    <property type="match status" value="1"/>
</dbReference>
<dbReference type="PROSITE" id="PS51625">
    <property type="entry name" value="SAM_MT_TRMB"/>
    <property type="match status" value="1"/>
</dbReference>
<name>TRMB_PARMW</name>
<feature type="chain" id="PRO_0000171411" description="tRNA (guanine-N(7)-)-methyltransferase">
    <location>
        <begin position="1"/>
        <end position="236"/>
    </location>
</feature>
<feature type="active site" evidence="1">
    <location>
        <position position="113"/>
    </location>
</feature>
<feature type="binding site" evidence="2">
    <location>
        <position position="35"/>
    </location>
    <ligand>
        <name>S-adenosyl-L-methionine</name>
        <dbReference type="ChEBI" id="CHEBI:59789"/>
    </ligand>
</feature>
<feature type="binding site" evidence="2">
    <location>
        <position position="60"/>
    </location>
    <ligand>
        <name>S-adenosyl-L-methionine</name>
        <dbReference type="ChEBI" id="CHEBI:59789"/>
    </ligand>
</feature>
<feature type="binding site" evidence="2">
    <location>
        <position position="87"/>
    </location>
    <ligand>
        <name>S-adenosyl-L-methionine</name>
        <dbReference type="ChEBI" id="CHEBI:59789"/>
    </ligand>
</feature>
<feature type="binding site" evidence="2">
    <location>
        <position position="113"/>
    </location>
    <ligand>
        <name>S-adenosyl-L-methionine</name>
        <dbReference type="ChEBI" id="CHEBI:59789"/>
    </ligand>
</feature>
<feature type="binding site" evidence="2">
    <location>
        <position position="117"/>
    </location>
    <ligand>
        <name>substrate</name>
    </ligand>
</feature>
<feature type="binding site" evidence="2">
    <location>
        <position position="149"/>
    </location>
    <ligand>
        <name>substrate</name>
    </ligand>
</feature>
<organism>
    <name type="scientific">Parasynechococcus marenigrum (strain WH8102)</name>
    <dbReference type="NCBI Taxonomy" id="84588"/>
    <lineage>
        <taxon>Bacteria</taxon>
        <taxon>Bacillati</taxon>
        <taxon>Cyanobacteriota</taxon>
        <taxon>Cyanophyceae</taxon>
        <taxon>Synechococcales</taxon>
        <taxon>Prochlorococcaceae</taxon>
        <taxon>Parasynechococcus</taxon>
        <taxon>Parasynechococcus marenigrum</taxon>
    </lineage>
</organism>
<reference key="1">
    <citation type="journal article" date="2003" name="Nature">
        <title>The genome of a motile marine Synechococcus.</title>
        <authorList>
            <person name="Palenik B."/>
            <person name="Brahamsha B."/>
            <person name="Larimer F.W."/>
            <person name="Land M.L."/>
            <person name="Hauser L."/>
            <person name="Chain P."/>
            <person name="Lamerdin J.E."/>
            <person name="Regala W."/>
            <person name="Allen E.E."/>
            <person name="McCarren J."/>
            <person name="Paulsen I.T."/>
            <person name="Dufresne A."/>
            <person name="Partensky F."/>
            <person name="Webb E.A."/>
            <person name="Waterbury J."/>
        </authorList>
    </citation>
    <scope>NUCLEOTIDE SEQUENCE [LARGE SCALE GENOMIC DNA]</scope>
    <source>
        <strain>WH8102</strain>
    </source>
</reference>
<keyword id="KW-0489">Methyltransferase</keyword>
<keyword id="KW-0949">S-adenosyl-L-methionine</keyword>
<keyword id="KW-0808">Transferase</keyword>
<keyword id="KW-0819">tRNA processing</keyword>
<accession>Q7U9H3</accession>
<proteinExistence type="inferred from homology"/>
<protein>
    <recommendedName>
        <fullName evidence="2">tRNA (guanine-N(7)-)-methyltransferase</fullName>
        <ecNumber evidence="2">2.1.1.33</ecNumber>
    </recommendedName>
    <alternativeName>
        <fullName evidence="2">tRNA (guanine(46)-N(7))-methyltransferase</fullName>
    </alternativeName>
    <alternativeName>
        <fullName evidence="2">tRNA(m7G46)-methyltransferase</fullName>
    </alternativeName>
</protein>
<evidence type="ECO:0000250" key="1"/>
<evidence type="ECO:0000255" key="2">
    <source>
        <dbReference type="HAMAP-Rule" id="MF_01057"/>
    </source>
</evidence>
<comment type="function">
    <text evidence="2">Catalyzes the formation of N(7)-methylguanine at position 46 (m7G46) in tRNA.</text>
</comment>
<comment type="catalytic activity">
    <reaction evidence="2">
        <text>guanosine(46) in tRNA + S-adenosyl-L-methionine = N(7)-methylguanosine(46) in tRNA + S-adenosyl-L-homocysteine</text>
        <dbReference type="Rhea" id="RHEA:42708"/>
        <dbReference type="Rhea" id="RHEA-COMP:10188"/>
        <dbReference type="Rhea" id="RHEA-COMP:10189"/>
        <dbReference type="ChEBI" id="CHEBI:57856"/>
        <dbReference type="ChEBI" id="CHEBI:59789"/>
        <dbReference type="ChEBI" id="CHEBI:74269"/>
        <dbReference type="ChEBI" id="CHEBI:74480"/>
        <dbReference type="EC" id="2.1.1.33"/>
    </reaction>
</comment>
<comment type="pathway">
    <text evidence="2">tRNA modification; N(7)-methylguanine-tRNA biosynthesis.</text>
</comment>
<comment type="similarity">
    <text evidence="2">Belongs to the class I-like SAM-binding methyltransferase superfamily. TrmB family.</text>
</comment>